<proteinExistence type="evidence at protein level"/>
<comment type="function">
    <text evidence="1">Essential protein that plays a role in the control of cell division, possibly through the transcriptional regulation of ccrM, rpoD, pleC, minC and ftsZ genes.</text>
</comment>
<comment type="subcellular location">
    <subcellularLocation>
        <location evidence="1">Cytoplasm</location>
    </subcellularLocation>
</comment>
<gene>
    <name type="primary">ctrA</name>
    <name type="ordered locus">BR1599</name>
    <name type="ordered locus">BS1330_I1593</name>
</gene>
<evidence type="ECO:0000250" key="1"/>
<evidence type="ECO:0000255" key="2">
    <source>
        <dbReference type="PROSITE-ProRule" id="PRU00169"/>
    </source>
</evidence>
<evidence type="ECO:0000255" key="3">
    <source>
        <dbReference type="PROSITE-ProRule" id="PRU01091"/>
    </source>
</evidence>
<feature type="chain" id="PRO_0000363202" description="Cell cycle response regulator CtrA">
    <location>
        <begin position="1"/>
        <end position="232"/>
    </location>
</feature>
<feature type="domain" description="Response regulatory" evidence="2">
    <location>
        <begin position="2"/>
        <end position="116"/>
    </location>
</feature>
<feature type="DNA-binding region" description="OmpR/PhoB-type" evidence="3">
    <location>
        <begin position="124"/>
        <end position="223"/>
    </location>
</feature>
<feature type="modified residue" description="4-aspartylphosphate" evidence="2">
    <location>
        <position position="51"/>
    </location>
</feature>
<protein>
    <recommendedName>
        <fullName>Cell cycle response regulator CtrA</fullName>
    </recommendedName>
</protein>
<dbReference type="EMBL" id="AE014291">
    <property type="protein sequence ID" value="AAN30504.1"/>
    <property type="molecule type" value="Genomic_DNA"/>
</dbReference>
<dbReference type="EMBL" id="CP002997">
    <property type="protein sequence ID" value="AEM18920.1"/>
    <property type="molecule type" value="Genomic_DNA"/>
</dbReference>
<dbReference type="PIR" id="AI3304">
    <property type="entry name" value="AI3304"/>
</dbReference>
<dbReference type="RefSeq" id="WP_002964699.1">
    <property type="nucleotide sequence ID" value="NZ_KN046804.1"/>
</dbReference>
<dbReference type="SMR" id="Q8FZ93"/>
<dbReference type="GeneID" id="97533230"/>
<dbReference type="KEGG" id="bms:BR1599"/>
<dbReference type="KEGG" id="bsi:BS1330_I1593"/>
<dbReference type="PATRIC" id="fig|204722.21.peg.3510"/>
<dbReference type="HOGENOM" id="CLU_000445_30_1_5"/>
<dbReference type="PhylomeDB" id="Q8FZ93"/>
<dbReference type="Proteomes" id="UP000007104">
    <property type="component" value="Chromosome I"/>
</dbReference>
<dbReference type="GO" id="GO:0005829">
    <property type="term" value="C:cytosol"/>
    <property type="evidence" value="ECO:0007669"/>
    <property type="project" value="TreeGrafter"/>
</dbReference>
<dbReference type="GO" id="GO:0032993">
    <property type="term" value="C:protein-DNA complex"/>
    <property type="evidence" value="ECO:0007669"/>
    <property type="project" value="TreeGrafter"/>
</dbReference>
<dbReference type="GO" id="GO:0000156">
    <property type="term" value="F:phosphorelay response regulator activity"/>
    <property type="evidence" value="ECO:0007669"/>
    <property type="project" value="TreeGrafter"/>
</dbReference>
<dbReference type="GO" id="GO:0000976">
    <property type="term" value="F:transcription cis-regulatory region binding"/>
    <property type="evidence" value="ECO:0007669"/>
    <property type="project" value="TreeGrafter"/>
</dbReference>
<dbReference type="GO" id="GO:0006355">
    <property type="term" value="P:regulation of DNA-templated transcription"/>
    <property type="evidence" value="ECO:0007669"/>
    <property type="project" value="InterPro"/>
</dbReference>
<dbReference type="CDD" id="cd17616">
    <property type="entry name" value="REC_OmpR_CtrA"/>
    <property type="match status" value="1"/>
</dbReference>
<dbReference type="CDD" id="cd00383">
    <property type="entry name" value="trans_reg_C"/>
    <property type="match status" value="1"/>
</dbReference>
<dbReference type="FunFam" id="1.10.10.10:FF:000052">
    <property type="entry name" value="Cell cycle response regulator"/>
    <property type="match status" value="1"/>
</dbReference>
<dbReference type="FunFam" id="3.40.50.2300:FF:000011">
    <property type="entry name" value="Cell cycle response regulator CtrA"/>
    <property type="match status" value="1"/>
</dbReference>
<dbReference type="Gene3D" id="3.40.50.2300">
    <property type="match status" value="1"/>
</dbReference>
<dbReference type="Gene3D" id="6.10.250.690">
    <property type="match status" value="1"/>
</dbReference>
<dbReference type="Gene3D" id="1.10.10.10">
    <property type="entry name" value="Winged helix-like DNA-binding domain superfamily/Winged helix DNA-binding domain"/>
    <property type="match status" value="1"/>
</dbReference>
<dbReference type="InterPro" id="IPR011006">
    <property type="entry name" value="CheY-like_superfamily"/>
</dbReference>
<dbReference type="InterPro" id="IPR001867">
    <property type="entry name" value="OmpR/PhoB-type_DNA-bd"/>
</dbReference>
<dbReference type="InterPro" id="IPR001789">
    <property type="entry name" value="Sig_transdc_resp-reg_receiver"/>
</dbReference>
<dbReference type="InterPro" id="IPR039420">
    <property type="entry name" value="WalR-like"/>
</dbReference>
<dbReference type="InterPro" id="IPR036388">
    <property type="entry name" value="WH-like_DNA-bd_sf"/>
</dbReference>
<dbReference type="NCBIfam" id="NF045991">
    <property type="entry name" value="RespRegCtrARhodob"/>
    <property type="match status" value="1"/>
</dbReference>
<dbReference type="PANTHER" id="PTHR48111">
    <property type="entry name" value="REGULATOR OF RPOS"/>
    <property type="match status" value="1"/>
</dbReference>
<dbReference type="PANTHER" id="PTHR48111:SF22">
    <property type="entry name" value="REGULATOR OF RPOS"/>
    <property type="match status" value="1"/>
</dbReference>
<dbReference type="Pfam" id="PF00072">
    <property type="entry name" value="Response_reg"/>
    <property type="match status" value="1"/>
</dbReference>
<dbReference type="Pfam" id="PF00486">
    <property type="entry name" value="Trans_reg_C"/>
    <property type="match status" value="1"/>
</dbReference>
<dbReference type="SMART" id="SM00448">
    <property type="entry name" value="REC"/>
    <property type="match status" value="1"/>
</dbReference>
<dbReference type="SMART" id="SM00862">
    <property type="entry name" value="Trans_reg_C"/>
    <property type="match status" value="1"/>
</dbReference>
<dbReference type="SUPFAM" id="SSF52172">
    <property type="entry name" value="CheY-like"/>
    <property type="match status" value="1"/>
</dbReference>
<dbReference type="PROSITE" id="PS51755">
    <property type="entry name" value="OMPR_PHOB"/>
    <property type="match status" value="1"/>
</dbReference>
<dbReference type="PROSITE" id="PS50110">
    <property type="entry name" value="RESPONSE_REGULATORY"/>
    <property type="match status" value="1"/>
</dbReference>
<accession>Q8FZ93</accession>
<accession>G0K6D6</accession>
<sequence length="232" mass="26066">MRVLLIEDDSAIAQSIELMLKSESFNVYTTDLGEEGIDLGKLYDYDIILLDLNLPDMSGYEVLRTLRLSKVKTPILILSGMAGIEDKVRGLGFGADDYMTKPFHKDELIARIHAIVRRSKGHAQSVITTGDLVVNLDAKTVEVAGQRVHLTGKEYQMLELLSLRKGTTLTKEMFLNHLYGGMDEPELKIIDVFICKLRKKLDAVSGNQSYIETVWGRGYVLREPDAEMRESA</sequence>
<organism>
    <name type="scientific">Brucella suis biovar 1 (strain 1330)</name>
    <dbReference type="NCBI Taxonomy" id="204722"/>
    <lineage>
        <taxon>Bacteria</taxon>
        <taxon>Pseudomonadati</taxon>
        <taxon>Pseudomonadota</taxon>
        <taxon>Alphaproteobacteria</taxon>
        <taxon>Hyphomicrobiales</taxon>
        <taxon>Brucellaceae</taxon>
        <taxon>Brucella/Ochrobactrum group</taxon>
        <taxon>Brucella</taxon>
    </lineage>
</organism>
<reference key="1">
    <citation type="journal article" date="2002" name="Proc. Natl. Acad. Sci. U.S.A.">
        <title>The Brucella suis genome reveals fundamental similarities between animal and plant pathogens and symbionts.</title>
        <authorList>
            <person name="Paulsen I.T."/>
            <person name="Seshadri R."/>
            <person name="Nelson K.E."/>
            <person name="Eisen J.A."/>
            <person name="Heidelberg J.F."/>
            <person name="Read T.D."/>
            <person name="Dodson R.J."/>
            <person name="Umayam L.A."/>
            <person name="Brinkac L.M."/>
            <person name="Beanan M.J."/>
            <person name="Daugherty S.C."/>
            <person name="DeBoy R.T."/>
            <person name="Durkin A.S."/>
            <person name="Kolonay J.F."/>
            <person name="Madupu R."/>
            <person name="Nelson W.C."/>
            <person name="Ayodeji B."/>
            <person name="Kraul M."/>
            <person name="Shetty J."/>
            <person name="Malek J.A."/>
            <person name="Van Aken S.E."/>
            <person name="Riedmuller S."/>
            <person name="Tettelin H."/>
            <person name="Gill S.R."/>
            <person name="White O."/>
            <person name="Salzberg S.L."/>
            <person name="Hoover D.L."/>
            <person name="Lindler L.E."/>
            <person name="Halling S.M."/>
            <person name="Boyle S.M."/>
            <person name="Fraser C.M."/>
        </authorList>
    </citation>
    <scope>NUCLEOTIDE SEQUENCE [LARGE SCALE GENOMIC DNA]</scope>
    <source>
        <strain>1330</strain>
    </source>
</reference>
<reference key="2">
    <citation type="journal article" date="2011" name="J. Bacteriol.">
        <title>Revised genome sequence of Brucella suis 1330.</title>
        <authorList>
            <person name="Tae H."/>
            <person name="Shallom S."/>
            <person name="Settlage R."/>
            <person name="Preston D."/>
            <person name="Adams L.G."/>
            <person name="Garner H.R."/>
        </authorList>
    </citation>
    <scope>NUCLEOTIDE SEQUENCE [LARGE SCALE GENOMIC DNA]</scope>
    <source>
        <strain>1330</strain>
    </source>
</reference>
<reference key="3">
    <citation type="journal article" date="2002" name="Mol. Microbiol.">
        <title>Plasticity of a transcriptional regulation network among alpha-proteobacteria is supported by the identification of CtrA targets in Brucella abortus.</title>
        <authorList>
            <person name="Bellefontaine A.F."/>
            <person name="Pierreux C.E."/>
            <person name="Mertens P."/>
            <person name="Vandenhaute J."/>
            <person name="Letesson J.J."/>
            <person name="De Bolle X."/>
        </authorList>
    </citation>
    <scope>PROTEIN EXPRESSION</scope>
    <source>
        <strain>1330</strain>
    </source>
</reference>
<keyword id="KW-0963">Cytoplasm</keyword>
<keyword id="KW-0238">DNA-binding</keyword>
<keyword id="KW-0597">Phosphoprotein</keyword>
<keyword id="KW-0804">Transcription</keyword>
<keyword id="KW-0805">Transcription regulation</keyword>
<keyword id="KW-0902">Two-component regulatory system</keyword>
<name>CTRA_BRUSU</name>